<evidence type="ECO:0000255" key="1">
    <source>
        <dbReference type="HAMAP-Rule" id="MF_01320"/>
    </source>
</evidence>
<evidence type="ECO:0000256" key="2">
    <source>
        <dbReference type="SAM" id="MobiDB-lite"/>
    </source>
</evidence>
<evidence type="ECO:0000305" key="3"/>
<feature type="chain" id="PRO_0000309859" description="Large ribosomal subunit protein uL2">
    <location>
        <begin position="1"/>
        <end position="274"/>
    </location>
</feature>
<feature type="region of interest" description="Disordered" evidence="2">
    <location>
        <begin position="37"/>
        <end position="60"/>
    </location>
</feature>
<feature type="region of interest" description="Disordered" evidence="2">
    <location>
        <begin position="224"/>
        <end position="252"/>
    </location>
</feature>
<feature type="compositionally biased region" description="Basic residues" evidence="2">
    <location>
        <begin position="50"/>
        <end position="60"/>
    </location>
</feature>
<feature type="compositionally biased region" description="Basic and acidic residues" evidence="2">
    <location>
        <begin position="229"/>
        <end position="246"/>
    </location>
</feature>
<organism>
    <name type="scientific">Paracidovorax citrulli (strain AAC00-1)</name>
    <name type="common">Acidovorax citrulli</name>
    <dbReference type="NCBI Taxonomy" id="397945"/>
    <lineage>
        <taxon>Bacteria</taxon>
        <taxon>Pseudomonadati</taxon>
        <taxon>Pseudomonadota</taxon>
        <taxon>Betaproteobacteria</taxon>
        <taxon>Burkholderiales</taxon>
        <taxon>Comamonadaceae</taxon>
        <taxon>Paracidovorax</taxon>
    </lineage>
</organism>
<protein>
    <recommendedName>
        <fullName evidence="1">Large ribosomal subunit protein uL2</fullName>
    </recommendedName>
    <alternativeName>
        <fullName evidence="3">50S ribosomal protein L2</fullName>
    </alternativeName>
</protein>
<dbReference type="EMBL" id="CP000512">
    <property type="protein sequence ID" value="ABM30948.1"/>
    <property type="molecule type" value="Genomic_DNA"/>
</dbReference>
<dbReference type="RefSeq" id="WP_011793525.1">
    <property type="nucleotide sequence ID" value="NC_008752.1"/>
</dbReference>
<dbReference type="SMR" id="A1TJ10"/>
<dbReference type="STRING" id="397945.Aave_0341"/>
<dbReference type="GeneID" id="79790146"/>
<dbReference type="KEGG" id="aav:Aave_0341"/>
<dbReference type="eggNOG" id="COG0090">
    <property type="taxonomic scope" value="Bacteria"/>
</dbReference>
<dbReference type="HOGENOM" id="CLU_036235_2_1_4"/>
<dbReference type="OrthoDB" id="9778722at2"/>
<dbReference type="Proteomes" id="UP000002596">
    <property type="component" value="Chromosome"/>
</dbReference>
<dbReference type="GO" id="GO:0015934">
    <property type="term" value="C:large ribosomal subunit"/>
    <property type="evidence" value="ECO:0007669"/>
    <property type="project" value="InterPro"/>
</dbReference>
<dbReference type="GO" id="GO:0019843">
    <property type="term" value="F:rRNA binding"/>
    <property type="evidence" value="ECO:0007669"/>
    <property type="project" value="UniProtKB-UniRule"/>
</dbReference>
<dbReference type="GO" id="GO:0003735">
    <property type="term" value="F:structural constituent of ribosome"/>
    <property type="evidence" value="ECO:0007669"/>
    <property type="project" value="InterPro"/>
</dbReference>
<dbReference type="GO" id="GO:0016740">
    <property type="term" value="F:transferase activity"/>
    <property type="evidence" value="ECO:0007669"/>
    <property type="project" value="InterPro"/>
</dbReference>
<dbReference type="GO" id="GO:0002181">
    <property type="term" value="P:cytoplasmic translation"/>
    <property type="evidence" value="ECO:0007669"/>
    <property type="project" value="TreeGrafter"/>
</dbReference>
<dbReference type="FunFam" id="2.30.30.30:FF:000001">
    <property type="entry name" value="50S ribosomal protein L2"/>
    <property type="match status" value="1"/>
</dbReference>
<dbReference type="FunFam" id="2.40.50.140:FF:000003">
    <property type="entry name" value="50S ribosomal protein L2"/>
    <property type="match status" value="1"/>
</dbReference>
<dbReference type="FunFam" id="4.10.950.10:FF:000001">
    <property type="entry name" value="50S ribosomal protein L2"/>
    <property type="match status" value="1"/>
</dbReference>
<dbReference type="Gene3D" id="2.30.30.30">
    <property type="match status" value="1"/>
</dbReference>
<dbReference type="Gene3D" id="2.40.50.140">
    <property type="entry name" value="Nucleic acid-binding proteins"/>
    <property type="match status" value="1"/>
</dbReference>
<dbReference type="Gene3D" id="4.10.950.10">
    <property type="entry name" value="Ribosomal protein L2, domain 3"/>
    <property type="match status" value="1"/>
</dbReference>
<dbReference type="HAMAP" id="MF_01320_B">
    <property type="entry name" value="Ribosomal_uL2_B"/>
    <property type="match status" value="1"/>
</dbReference>
<dbReference type="InterPro" id="IPR012340">
    <property type="entry name" value="NA-bd_OB-fold"/>
</dbReference>
<dbReference type="InterPro" id="IPR014722">
    <property type="entry name" value="Rib_uL2_dom2"/>
</dbReference>
<dbReference type="InterPro" id="IPR002171">
    <property type="entry name" value="Ribosomal_uL2"/>
</dbReference>
<dbReference type="InterPro" id="IPR005880">
    <property type="entry name" value="Ribosomal_uL2_bac/org-type"/>
</dbReference>
<dbReference type="InterPro" id="IPR022669">
    <property type="entry name" value="Ribosomal_uL2_C"/>
</dbReference>
<dbReference type="InterPro" id="IPR022671">
    <property type="entry name" value="Ribosomal_uL2_CS"/>
</dbReference>
<dbReference type="InterPro" id="IPR014726">
    <property type="entry name" value="Ribosomal_uL2_dom3"/>
</dbReference>
<dbReference type="InterPro" id="IPR022666">
    <property type="entry name" value="Ribosomal_uL2_RNA-bd_dom"/>
</dbReference>
<dbReference type="InterPro" id="IPR008991">
    <property type="entry name" value="Translation_prot_SH3-like_sf"/>
</dbReference>
<dbReference type="NCBIfam" id="TIGR01171">
    <property type="entry name" value="rplB_bact"/>
    <property type="match status" value="1"/>
</dbReference>
<dbReference type="PANTHER" id="PTHR13691:SF5">
    <property type="entry name" value="LARGE RIBOSOMAL SUBUNIT PROTEIN UL2M"/>
    <property type="match status" value="1"/>
</dbReference>
<dbReference type="PANTHER" id="PTHR13691">
    <property type="entry name" value="RIBOSOMAL PROTEIN L2"/>
    <property type="match status" value="1"/>
</dbReference>
<dbReference type="Pfam" id="PF00181">
    <property type="entry name" value="Ribosomal_L2"/>
    <property type="match status" value="1"/>
</dbReference>
<dbReference type="Pfam" id="PF03947">
    <property type="entry name" value="Ribosomal_L2_C"/>
    <property type="match status" value="1"/>
</dbReference>
<dbReference type="PIRSF" id="PIRSF002158">
    <property type="entry name" value="Ribosomal_L2"/>
    <property type="match status" value="1"/>
</dbReference>
<dbReference type="SMART" id="SM01383">
    <property type="entry name" value="Ribosomal_L2"/>
    <property type="match status" value="1"/>
</dbReference>
<dbReference type="SMART" id="SM01382">
    <property type="entry name" value="Ribosomal_L2_C"/>
    <property type="match status" value="1"/>
</dbReference>
<dbReference type="SUPFAM" id="SSF50249">
    <property type="entry name" value="Nucleic acid-binding proteins"/>
    <property type="match status" value="1"/>
</dbReference>
<dbReference type="SUPFAM" id="SSF50104">
    <property type="entry name" value="Translation proteins SH3-like domain"/>
    <property type="match status" value="1"/>
</dbReference>
<dbReference type="PROSITE" id="PS00467">
    <property type="entry name" value="RIBOSOMAL_L2"/>
    <property type="match status" value="1"/>
</dbReference>
<accession>A1TJ10</accession>
<keyword id="KW-0687">Ribonucleoprotein</keyword>
<keyword id="KW-0689">Ribosomal protein</keyword>
<keyword id="KW-0694">RNA-binding</keyword>
<keyword id="KW-0699">rRNA-binding</keyword>
<proteinExistence type="inferred from homology"/>
<name>RL2_PARC0</name>
<gene>
    <name evidence="1" type="primary">rplB</name>
    <name type="ordered locus">Aave_0341</name>
</gene>
<comment type="function">
    <text evidence="1">One of the primary rRNA binding proteins. Required for association of the 30S and 50S subunits to form the 70S ribosome, for tRNA binding and peptide bond formation. It has been suggested to have peptidyltransferase activity; this is somewhat controversial. Makes several contacts with the 16S rRNA in the 70S ribosome.</text>
</comment>
<comment type="subunit">
    <text evidence="1">Part of the 50S ribosomal subunit. Forms a bridge to the 30S subunit in the 70S ribosome.</text>
</comment>
<comment type="similarity">
    <text evidence="1">Belongs to the universal ribosomal protein uL2 family.</text>
</comment>
<reference key="1">
    <citation type="submission" date="2006-12" db="EMBL/GenBank/DDBJ databases">
        <title>Complete sequence of Acidovorax avenae subsp. citrulli AAC00-1.</title>
        <authorList>
            <person name="Copeland A."/>
            <person name="Lucas S."/>
            <person name="Lapidus A."/>
            <person name="Barry K."/>
            <person name="Detter J.C."/>
            <person name="Glavina del Rio T."/>
            <person name="Dalin E."/>
            <person name="Tice H."/>
            <person name="Pitluck S."/>
            <person name="Kiss H."/>
            <person name="Brettin T."/>
            <person name="Bruce D."/>
            <person name="Han C."/>
            <person name="Tapia R."/>
            <person name="Gilna P."/>
            <person name="Schmutz J."/>
            <person name="Larimer F."/>
            <person name="Land M."/>
            <person name="Hauser L."/>
            <person name="Kyrpides N."/>
            <person name="Kim E."/>
            <person name="Stahl D."/>
            <person name="Richardson P."/>
        </authorList>
    </citation>
    <scope>NUCLEOTIDE SEQUENCE [LARGE SCALE GENOMIC DNA]</scope>
    <source>
        <strain>AAC00-1</strain>
    </source>
</reference>
<sequence length="274" mass="30257">MAVIKMKPTSPGQRAVVKVTRDHLYKGEAFAALLEPQHQKSGRNNNGHITTRHKGGGHKHHYRVVDFKRNKDAIPAKVERIEYDPNRTAHIALVCYADGERRYIIAPRNLEVGATIVSGSEAPIRVGNTLPIRNIPVGSTIHCIELKPGAGAQIARSAGTSATLLAREGTYAQVRMRSGEVRRIHIECRATIGEVANEEHSLRQLGKAGVKRWMGIRPTVRGVAMNPIDHPHGGGEGRTGEGRHAVDPWGNLTKGYRTRNNKRTQVMIVSRRKK</sequence>